<feature type="chain" id="PRO_0000097587" description="NAD(+) hydrolase tir-1">
    <location>
        <begin position="1"/>
        <end position="981"/>
    </location>
</feature>
<feature type="domain" description="SAM 1" evidence="2">
    <location>
        <begin position="614"/>
        <end position="678"/>
    </location>
</feature>
<feature type="domain" description="SAM 2" evidence="2">
    <location>
        <begin position="684"/>
        <end position="750"/>
    </location>
</feature>
<feature type="domain" description="TIR" evidence="3">
    <location>
        <begin position="760"/>
        <end position="857"/>
    </location>
</feature>
<feature type="region of interest" description="Disordered" evidence="4">
    <location>
        <begin position="1"/>
        <end position="31"/>
    </location>
</feature>
<feature type="region of interest" description="Disordered" evidence="4">
    <location>
        <begin position="74"/>
        <end position="128"/>
    </location>
</feature>
<feature type="region of interest" description="Disordered" evidence="4">
    <location>
        <begin position="173"/>
        <end position="225"/>
    </location>
</feature>
<feature type="region of interest" description="Disordered" evidence="4">
    <location>
        <begin position="908"/>
        <end position="981"/>
    </location>
</feature>
<feature type="compositionally biased region" description="Polar residues" evidence="4">
    <location>
        <begin position="12"/>
        <end position="23"/>
    </location>
</feature>
<feature type="compositionally biased region" description="Polar residues" evidence="4">
    <location>
        <begin position="74"/>
        <end position="85"/>
    </location>
</feature>
<feature type="compositionally biased region" description="Acidic residues" evidence="4">
    <location>
        <begin position="87"/>
        <end position="97"/>
    </location>
</feature>
<feature type="compositionally biased region" description="Low complexity" evidence="4">
    <location>
        <begin position="98"/>
        <end position="114"/>
    </location>
</feature>
<feature type="compositionally biased region" description="Pro residues" evidence="4">
    <location>
        <begin position="115"/>
        <end position="128"/>
    </location>
</feature>
<feature type="compositionally biased region" description="Basic and acidic residues" evidence="4">
    <location>
        <begin position="182"/>
        <end position="200"/>
    </location>
</feature>
<feature type="compositionally biased region" description="Polar residues" evidence="4">
    <location>
        <begin position="908"/>
        <end position="939"/>
    </location>
</feature>
<feature type="compositionally biased region" description="Polar residues" evidence="4">
    <location>
        <begin position="954"/>
        <end position="963"/>
    </location>
</feature>
<feature type="compositionally biased region" description="Polar residues" evidence="4">
    <location>
        <begin position="972"/>
        <end position="981"/>
    </location>
</feature>
<feature type="active site" evidence="3">
    <location>
        <position position="842"/>
    </location>
</feature>
<feature type="binding site" evidence="3">
    <location>
        <begin position="769"/>
        <end position="770"/>
    </location>
    <ligand>
        <name>NAD(+)</name>
        <dbReference type="ChEBI" id="CHEBI:57540"/>
        <note>substrate</note>
    </ligand>
</feature>
<feature type="splice variant" id="VSP_013613" description="In isoform d." evidence="16">
    <location>
        <begin position="1"/>
        <end position="638"/>
    </location>
</feature>
<feature type="splice variant" id="VSP_060732" description="In isoform b." evidence="16">
    <original>MLPNRKPPRPSPSFQSLNNNNQRFPLRRSLKIAQAHSLPTVPSEDAKDDDLITPELSTDFDFREIQHRYLMALQNEQDGETTSTDDAFFELDDDDDLSSPSVPGSPVDPPSISVPLPPKSAPPCPTQPAPLTNGDLYPTILSNGTPIPNGRITPALSTVSVSLIHEARLQQSLSTPCNGSEEEMHNGQVRKESEYRRFKSEGSTAGASLPAAEKTHMDELSPVDQRSTSGTARFLIQQDSVVNPSTKMSNTEQVAMMHTLKTKLSKYQAMMDKAFEEIAKVEDANIIEGCTIVRKLMRKVWNTPKVSADLANALCDYLRDRDYFDKLIKMFISPNTAACDQVRMECGKVLEECTSSANLEYIVNKSYTKKIMIVAMKLNKTPDQQRLSLSLIGNLFKHSNAVSLSLIETDVIDHIILTFKRAPECPDILRHAALALANILLYTCFEGKKKIIQKKIPEWLFFLASQADDVTRYYACIAVCTIVSVKEFEPLVRKSDTMKLVEPFLQVHDPATFARDYHKYAQGNTKEWLERLLPMLQPSRRREARSVAAFHFTLEATIKKEQNKLDVFQ</original>
    <variation>MCALVSSPMVSLPFNENVAPECRRNLLPRFAAVSPRPKAAVTPFVSTPSSSSITSFPYSLKLSNSNSNCSSLSRPSSLTDLPILLRDVEDQMYDDDETPIIPCGSPSSSNSMLAQIQFHPPPTEMNSPLKTSLKKLPMKTALVIRPQMFVKENSVQLERFRKSKTRRFFHPYAK</variation>
    <location>
        <begin position="1"/>
        <end position="569"/>
    </location>
</feature>
<feature type="splice variant" id="VSP_060733" description="In isoform e." evidence="16">
    <location>
        <begin position="1"/>
        <end position="183"/>
    </location>
</feature>
<feature type="splice variant" id="VSP_060730" description="In isoform a." evidence="16">
    <original>MLPNRKPPRPSPSFQSLNNNNQRFPLRRSLKIAQAHSLPTVPSEDAKDDDLITPELSTDFDFREIQHRYLMALQNEQDGETTS</original>
    <variation>MGEEILTERNQLSRQDASCFRSPRSPLGR</variation>
    <location>
        <begin position="1"/>
        <end position="83"/>
    </location>
</feature>
<feature type="splice variant" id="VSP_060731" description="In isoform a and isoform e." evidence="16">
    <original>F</original>
    <variation>FFSV</variation>
    <location>
        <position position="954"/>
    </location>
</feature>
<evidence type="ECO:0000250" key="1">
    <source>
        <dbReference type="UniProtKB" id="Q6SZW1"/>
    </source>
</evidence>
<evidence type="ECO:0000255" key="2">
    <source>
        <dbReference type="PROSITE-ProRule" id="PRU00184"/>
    </source>
</evidence>
<evidence type="ECO:0000255" key="3">
    <source>
        <dbReference type="PROSITE-ProRule" id="PRU00204"/>
    </source>
</evidence>
<evidence type="ECO:0000256" key="4">
    <source>
        <dbReference type="SAM" id="MobiDB-lite"/>
    </source>
</evidence>
<evidence type="ECO:0000269" key="5">
    <source>
    </source>
</evidence>
<evidence type="ECO:0000269" key="6">
    <source>
    </source>
</evidence>
<evidence type="ECO:0000269" key="7">
    <source>
    </source>
</evidence>
<evidence type="ECO:0000269" key="8">
    <source>
    </source>
</evidence>
<evidence type="ECO:0000269" key="9">
    <source>
    </source>
</evidence>
<evidence type="ECO:0000269" key="10">
    <source>
    </source>
</evidence>
<evidence type="ECO:0000269" key="11">
    <source>
    </source>
</evidence>
<evidence type="ECO:0000269" key="12">
    <source>
    </source>
</evidence>
<evidence type="ECO:0000269" key="13">
    <source>
    </source>
</evidence>
<evidence type="ECO:0000269" key="14">
    <source>
    </source>
</evidence>
<evidence type="ECO:0000303" key="15">
    <source>
    </source>
</evidence>
<evidence type="ECO:0000305" key="16"/>
<evidence type="ECO:0000312" key="17">
    <source>
        <dbReference type="WormBase" id="F13B10.1a"/>
    </source>
</evidence>
<evidence type="ECO:0000312" key="18">
    <source>
        <dbReference type="WormBase" id="F13B10.1b"/>
    </source>
</evidence>
<evidence type="ECO:0000312" key="19">
    <source>
        <dbReference type="WormBase" id="F13B10.1c"/>
    </source>
</evidence>
<evidence type="ECO:0000312" key="20">
    <source>
        <dbReference type="WormBase" id="F13B10.1d"/>
    </source>
</evidence>
<evidence type="ECO:0000312" key="21">
    <source>
        <dbReference type="WormBase" id="F13B10.1e"/>
    </source>
</evidence>
<organism>
    <name type="scientific">Caenorhabditis elegans</name>
    <dbReference type="NCBI Taxonomy" id="6239"/>
    <lineage>
        <taxon>Eukaryota</taxon>
        <taxon>Metazoa</taxon>
        <taxon>Ecdysozoa</taxon>
        <taxon>Nematoda</taxon>
        <taxon>Chromadorea</taxon>
        <taxon>Rhabditida</taxon>
        <taxon>Rhabditina</taxon>
        <taxon>Rhabditomorpha</taxon>
        <taxon>Rhabditoidea</taxon>
        <taxon>Rhabditidae</taxon>
        <taxon>Peloderinae</taxon>
        <taxon>Caenorhabditis</taxon>
    </lineage>
</organism>
<dbReference type="EC" id="3.2.2.6" evidence="14"/>
<dbReference type="EMBL" id="BX284603">
    <property type="protein sequence ID" value="CAA90181.1"/>
    <property type="molecule type" value="Genomic_DNA"/>
</dbReference>
<dbReference type="EMBL" id="BX284603">
    <property type="protein sequence ID" value="CAA90182.1"/>
    <property type="molecule type" value="Genomic_DNA"/>
</dbReference>
<dbReference type="EMBL" id="BX284603">
    <property type="protein sequence ID" value="CAD90174.1"/>
    <property type="molecule type" value="Genomic_DNA"/>
</dbReference>
<dbReference type="EMBL" id="BX284603">
    <property type="protein sequence ID" value="CAE47466.1"/>
    <property type="molecule type" value="Genomic_DNA"/>
</dbReference>
<dbReference type="EMBL" id="BX284603">
    <property type="protein sequence ID" value="CAE47467.1"/>
    <property type="molecule type" value="Genomic_DNA"/>
</dbReference>
<dbReference type="PIR" id="T20816">
    <property type="entry name" value="T20816"/>
</dbReference>
<dbReference type="PIR" id="T20817">
    <property type="entry name" value="T20817"/>
</dbReference>
<dbReference type="RefSeq" id="NP_001021251.2">
    <molecule id="Q86DA5-1"/>
    <property type="nucleotide sequence ID" value="NM_001026080.5"/>
</dbReference>
<dbReference type="RefSeq" id="NP_001021252.1">
    <property type="nucleotide sequence ID" value="NM_001026081.2"/>
</dbReference>
<dbReference type="RefSeq" id="NP_001021253.1">
    <property type="nucleotide sequence ID" value="NM_001026082.2"/>
</dbReference>
<dbReference type="RefSeq" id="NP_001367074.1">
    <molecule id="Q86DA5-5"/>
    <property type="nucleotide sequence ID" value="NM_001381812.1"/>
</dbReference>
<dbReference type="RefSeq" id="NP_001370174.1">
    <molecule id="Q86DA5-4"/>
    <property type="nucleotide sequence ID" value="NM_001384059.3"/>
</dbReference>
<dbReference type="RefSeq" id="NP_497784.1">
    <molecule id="Q86DA5-2"/>
    <property type="nucleotide sequence ID" value="NM_065383.6"/>
</dbReference>
<dbReference type="RefSeq" id="NP_497785.1">
    <molecule id="Q86DA5-3"/>
    <property type="nucleotide sequence ID" value="NM_065384.7"/>
</dbReference>
<dbReference type="PDB" id="8P2L">
    <property type="method" value="EM"/>
    <property type="resolution" value="2.68 A"/>
    <property type="chains" value="A/B/C/D/E/F/G/H/I/J/K/L/M/N/O/P=771-926"/>
</dbReference>
<dbReference type="PDB" id="8P2M">
    <property type="method" value="EM"/>
    <property type="resolution" value="3.82 A"/>
    <property type="chains" value="A/B/C/D/E/F/G/H/I=216-926"/>
</dbReference>
<dbReference type="PDBsum" id="8P2L"/>
<dbReference type="PDBsum" id="8P2M"/>
<dbReference type="EMDB" id="EMD-17369"/>
<dbReference type="EMDB" id="EMD-17370"/>
<dbReference type="SMR" id="Q86DA5"/>
<dbReference type="BioGRID" id="40740">
    <property type="interactions" value="27"/>
</dbReference>
<dbReference type="DIP" id="DIP-26569N"/>
<dbReference type="FunCoup" id="Q86DA5">
    <property type="interactions" value="1127"/>
</dbReference>
<dbReference type="IntAct" id="Q86DA5">
    <property type="interactions" value="18"/>
</dbReference>
<dbReference type="STRING" id="6239.F13B10.1f.1"/>
<dbReference type="iPTMnet" id="Q86DA5"/>
<dbReference type="PaxDb" id="6239-F13B10.1c"/>
<dbReference type="PeptideAtlas" id="Q86DA5"/>
<dbReference type="EnsemblMetazoa" id="F13B10.1a.1">
    <molecule id="Q86DA5-2"/>
    <property type="protein sequence ID" value="F13B10.1a.1"/>
    <property type="gene ID" value="WBGene00006575"/>
</dbReference>
<dbReference type="EnsemblMetazoa" id="F13B10.1a.2">
    <molecule id="Q86DA5-2"/>
    <property type="protein sequence ID" value="F13B10.1a.2"/>
    <property type="gene ID" value="WBGene00006575"/>
</dbReference>
<dbReference type="EnsemblMetazoa" id="F13B10.1b.1">
    <molecule id="Q86DA5-3"/>
    <property type="protein sequence ID" value="F13B10.1b.1"/>
    <property type="gene ID" value="WBGene00006575"/>
</dbReference>
<dbReference type="EnsemblMetazoa" id="F13B10.1c.1">
    <molecule id="Q86DA5-1"/>
    <property type="protein sequence ID" value="F13B10.1c.1"/>
    <property type="gene ID" value="WBGene00006575"/>
</dbReference>
<dbReference type="EnsemblMetazoa" id="F13B10.1d.1">
    <molecule id="Q86DA5-4"/>
    <property type="protein sequence ID" value="F13B10.1d.1"/>
    <property type="gene ID" value="WBGene00006575"/>
</dbReference>
<dbReference type="EnsemblMetazoa" id="F13B10.1d.2">
    <molecule id="Q86DA5-4"/>
    <property type="protein sequence ID" value="F13B10.1d.2"/>
    <property type="gene ID" value="WBGene00006575"/>
</dbReference>
<dbReference type="EnsemblMetazoa" id="F13B10.1d.3">
    <molecule id="Q86DA5-4"/>
    <property type="protein sequence ID" value="F13B10.1d.3"/>
    <property type="gene ID" value="WBGene00006575"/>
</dbReference>
<dbReference type="EnsemblMetazoa" id="F13B10.1e.1">
    <molecule id="Q86DA5-5"/>
    <property type="protein sequence ID" value="F13B10.1e.1"/>
    <property type="gene ID" value="WBGene00006575"/>
</dbReference>
<dbReference type="EnsemblMetazoa" id="F13B10.1e.2">
    <molecule id="Q86DA5-5"/>
    <property type="protein sequence ID" value="F13B10.1e.2"/>
    <property type="gene ID" value="WBGene00006575"/>
</dbReference>
<dbReference type="EnsemblMetazoa" id="F13B10.1e.3">
    <molecule id="Q86DA5-5"/>
    <property type="protein sequence ID" value="F13B10.1e.3"/>
    <property type="gene ID" value="WBGene00006575"/>
</dbReference>
<dbReference type="GeneID" id="175502"/>
<dbReference type="KEGG" id="cel:CELE_F13B10.1"/>
<dbReference type="UCSC" id="F13B10.1e.2">
    <molecule id="Q86DA5-1"/>
    <property type="organism name" value="c. elegans"/>
</dbReference>
<dbReference type="AGR" id="WB:WBGene00006575"/>
<dbReference type="CTD" id="175502"/>
<dbReference type="WormBase" id="F13B10.1a">
    <molecule id="Q86DA5-2"/>
    <property type="protein sequence ID" value="CE20681"/>
    <property type="gene ID" value="WBGene00006575"/>
    <property type="gene designation" value="tir-1"/>
</dbReference>
<dbReference type="WormBase" id="F13B10.1b">
    <molecule id="Q86DA5-3"/>
    <property type="protein sequence ID" value="CE15818"/>
    <property type="gene ID" value="WBGene00006575"/>
    <property type="gene designation" value="tir-1"/>
</dbReference>
<dbReference type="WormBase" id="F13B10.1c">
    <molecule id="Q86DA5-1"/>
    <property type="protein sequence ID" value="CE50801"/>
    <property type="gene ID" value="WBGene00006575"/>
    <property type="gene designation" value="tir-1"/>
</dbReference>
<dbReference type="WormBase" id="F13B10.1d">
    <molecule id="Q86DA5-4"/>
    <property type="protein sequence ID" value="CE35712"/>
    <property type="gene ID" value="WBGene00006575"/>
    <property type="gene designation" value="tir-1"/>
</dbReference>
<dbReference type="WormBase" id="F13B10.1e">
    <molecule id="Q86DA5-5"/>
    <property type="protein sequence ID" value="CE35713"/>
    <property type="gene ID" value="WBGene00006575"/>
    <property type="gene designation" value="tir-1"/>
</dbReference>
<dbReference type="eggNOG" id="KOG3678">
    <property type="taxonomic scope" value="Eukaryota"/>
</dbReference>
<dbReference type="GeneTree" id="ENSGT00390000004155"/>
<dbReference type="InParanoid" id="Q86DA5"/>
<dbReference type="OrthoDB" id="202764at2759"/>
<dbReference type="PhylomeDB" id="Q86DA5"/>
<dbReference type="SignaLink" id="Q86DA5"/>
<dbReference type="PRO" id="PR:Q86DA5"/>
<dbReference type="Proteomes" id="UP000001940">
    <property type="component" value="Chromosome III"/>
</dbReference>
<dbReference type="Bgee" id="WBGene00006575">
    <property type="expression patterns" value="Expressed in pharyngeal muscle cell (C elegans) and 3 other cell types or tissues"/>
</dbReference>
<dbReference type="ExpressionAtlas" id="Q86DA5">
    <property type="expression patterns" value="baseline and differential"/>
</dbReference>
<dbReference type="GO" id="GO:0030424">
    <property type="term" value="C:axon"/>
    <property type="evidence" value="ECO:0000314"/>
    <property type="project" value="UniProtKB"/>
</dbReference>
<dbReference type="GO" id="GO:1904115">
    <property type="term" value="C:axon cytoplasm"/>
    <property type="evidence" value="ECO:0000314"/>
    <property type="project" value="WormBase"/>
</dbReference>
<dbReference type="GO" id="GO:0044297">
    <property type="term" value="C:cell body"/>
    <property type="evidence" value="ECO:0000314"/>
    <property type="project" value="UniProtKB"/>
</dbReference>
<dbReference type="GO" id="GO:0005737">
    <property type="term" value="C:cytoplasm"/>
    <property type="evidence" value="ECO:0000314"/>
    <property type="project" value="WormBase"/>
</dbReference>
<dbReference type="GO" id="GO:0030425">
    <property type="term" value="C:dendrite"/>
    <property type="evidence" value="ECO:0000318"/>
    <property type="project" value="GO_Central"/>
</dbReference>
<dbReference type="GO" id="GO:0042802">
    <property type="term" value="F:identical protein binding"/>
    <property type="evidence" value="ECO:0000353"/>
    <property type="project" value="IntAct"/>
</dbReference>
<dbReference type="GO" id="GO:0003953">
    <property type="term" value="F:NAD+ nucleosidase activity"/>
    <property type="evidence" value="ECO:0000314"/>
    <property type="project" value="UniProtKB"/>
</dbReference>
<dbReference type="GO" id="GO:0061809">
    <property type="term" value="F:NAD+ nucleosidase activity, cyclic ADP-ribose generating"/>
    <property type="evidence" value="ECO:0007669"/>
    <property type="project" value="UniProtKB-EC"/>
</dbReference>
<dbReference type="GO" id="GO:0019901">
    <property type="term" value="F:protein kinase binding"/>
    <property type="evidence" value="ECO:0000353"/>
    <property type="project" value="WormBase"/>
</dbReference>
<dbReference type="GO" id="GO:0035591">
    <property type="term" value="F:signaling adaptor activity"/>
    <property type="evidence" value="ECO:0000314"/>
    <property type="project" value="WormBase"/>
</dbReference>
<dbReference type="GO" id="GO:0031267">
    <property type="term" value="F:small GTPase binding"/>
    <property type="evidence" value="ECO:0000353"/>
    <property type="project" value="WormBase"/>
</dbReference>
<dbReference type="GO" id="GO:0140367">
    <property type="term" value="P:antibacterial innate immune response"/>
    <property type="evidence" value="ECO:0000315"/>
    <property type="project" value="WormBase"/>
</dbReference>
<dbReference type="GO" id="GO:0001708">
    <property type="term" value="P:cell fate specification"/>
    <property type="evidence" value="ECO:0000315"/>
    <property type="project" value="WormBase"/>
</dbReference>
<dbReference type="GO" id="GO:0007267">
    <property type="term" value="P:cell-cell signaling"/>
    <property type="evidence" value="ECO:0000315"/>
    <property type="project" value="WormBase"/>
</dbReference>
<dbReference type="GO" id="GO:0042742">
    <property type="term" value="P:defense response to bacterium"/>
    <property type="evidence" value="ECO:0000315"/>
    <property type="project" value="WormBase"/>
</dbReference>
<dbReference type="GO" id="GO:0050832">
    <property type="term" value="P:defense response to fungus"/>
    <property type="evidence" value="ECO:0000315"/>
    <property type="project" value="UniProtKB"/>
</dbReference>
<dbReference type="GO" id="GO:0050829">
    <property type="term" value="P:defense response to Gram-negative bacterium"/>
    <property type="evidence" value="ECO:0000315"/>
    <property type="project" value="UniProtKB"/>
</dbReference>
<dbReference type="GO" id="GO:0019677">
    <property type="term" value="P:NAD catabolic process"/>
    <property type="evidence" value="ECO:0000314"/>
    <property type="project" value="UniProtKB"/>
</dbReference>
<dbReference type="GO" id="GO:0010629">
    <property type="term" value="P:negative regulation of gene expression"/>
    <property type="evidence" value="ECO:0000315"/>
    <property type="project" value="UniProtKB"/>
</dbReference>
<dbReference type="GO" id="GO:0034128">
    <property type="term" value="P:negative regulation of MyD88-independent toll-like receptor signaling pathway"/>
    <property type="evidence" value="ECO:0007669"/>
    <property type="project" value="InterPro"/>
</dbReference>
<dbReference type="GO" id="GO:0007399">
    <property type="term" value="P:nervous system development"/>
    <property type="evidence" value="ECO:0007669"/>
    <property type="project" value="UniProtKB-KW"/>
</dbReference>
<dbReference type="GO" id="GO:0010628">
    <property type="term" value="P:positive regulation of gene expression"/>
    <property type="evidence" value="ECO:0000315"/>
    <property type="project" value="UniProtKB"/>
</dbReference>
<dbReference type="GO" id="GO:0045944">
    <property type="term" value="P:positive regulation of transcription by RNA polymerase II"/>
    <property type="evidence" value="ECO:0000315"/>
    <property type="project" value="WormBase"/>
</dbReference>
<dbReference type="GO" id="GO:0008104">
    <property type="term" value="P:protein localization"/>
    <property type="evidence" value="ECO:0000315"/>
    <property type="project" value="WormBase"/>
</dbReference>
<dbReference type="GO" id="GO:0048678">
    <property type="term" value="P:response to axon injury"/>
    <property type="evidence" value="ECO:0000314"/>
    <property type="project" value="UniProtKB"/>
</dbReference>
<dbReference type="GO" id="GO:0042427">
    <property type="term" value="P:serotonin biosynthetic process"/>
    <property type="evidence" value="ECO:0000315"/>
    <property type="project" value="UniProtKB"/>
</dbReference>
<dbReference type="GO" id="GO:0007165">
    <property type="term" value="P:signal transduction"/>
    <property type="evidence" value="ECO:0007669"/>
    <property type="project" value="InterPro"/>
</dbReference>
<dbReference type="CDD" id="cd09501">
    <property type="entry name" value="SAM_SARM1-like_repeat1"/>
    <property type="match status" value="1"/>
</dbReference>
<dbReference type="CDD" id="cd09502">
    <property type="entry name" value="SAM_SARM1-like_repeat2"/>
    <property type="match status" value="1"/>
</dbReference>
<dbReference type="CDD" id="cd24153">
    <property type="entry name" value="SARM1_N"/>
    <property type="match status" value="1"/>
</dbReference>
<dbReference type="FunFam" id="1.10.150.50:FF:000043">
    <property type="entry name" value="Sterile alpha and TIR motif-containing 1"/>
    <property type="match status" value="1"/>
</dbReference>
<dbReference type="FunFam" id="1.10.150.50:FF:000101">
    <property type="entry name" value="Sterile alpha and TIR motif-containing protein tir-1"/>
    <property type="match status" value="1"/>
</dbReference>
<dbReference type="FunFam" id="1.25.10.10:FF:001252">
    <property type="entry name" value="Sterile alpha and TIR motif-containing protein tir-1"/>
    <property type="match status" value="1"/>
</dbReference>
<dbReference type="FunFam" id="3.40.50.10140:FF:000023">
    <property type="entry name" value="Sterile alpha and TIR motif-containing protein tir-1"/>
    <property type="match status" value="1"/>
</dbReference>
<dbReference type="Gene3D" id="1.25.10.10">
    <property type="entry name" value="Leucine-rich Repeat Variant"/>
    <property type="match status" value="1"/>
</dbReference>
<dbReference type="Gene3D" id="3.40.50.10140">
    <property type="entry name" value="Toll/interleukin-1 receptor homology (TIR) domain"/>
    <property type="match status" value="1"/>
</dbReference>
<dbReference type="Gene3D" id="1.10.150.50">
    <property type="entry name" value="Transcription Factor, Ets-1"/>
    <property type="match status" value="2"/>
</dbReference>
<dbReference type="InterPro" id="IPR011989">
    <property type="entry name" value="ARM-like"/>
</dbReference>
<dbReference type="InterPro" id="IPR016024">
    <property type="entry name" value="ARM-type_fold"/>
</dbReference>
<dbReference type="InterPro" id="IPR001660">
    <property type="entry name" value="SAM"/>
</dbReference>
<dbReference type="InterPro" id="IPR013761">
    <property type="entry name" value="SAM/pointed_sf"/>
</dbReference>
<dbReference type="InterPro" id="IPR039184">
    <property type="entry name" value="SARM1"/>
</dbReference>
<dbReference type="InterPro" id="IPR000157">
    <property type="entry name" value="TIR_dom"/>
</dbReference>
<dbReference type="InterPro" id="IPR035897">
    <property type="entry name" value="Toll_tir_struct_dom_sf"/>
</dbReference>
<dbReference type="PANTHER" id="PTHR22998:SF1">
    <property type="entry name" value="NAD(+) HYDROLASE SARM1"/>
    <property type="match status" value="1"/>
</dbReference>
<dbReference type="PANTHER" id="PTHR22998">
    <property type="entry name" value="SARM1"/>
    <property type="match status" value="1"/>
</dbReference>
<dbReference type="Pfam" id="PF00536">
    <property type="entry name" value="SAM_1"/>
    <property type="match status" value="1"/>
</dbReference>
<dbReference type="Pfam" id="PF07647">
    <property type="entry name" value="SAM_2"/>
    <property type="match status" value="1"/>
</dbReference>
<dbReference type="Pfam" id="PF13676">
    <property type="entry name" value="TIR_2"/>
    <property type="match status" value="1"/>
</dbReference>
<dbReference type="SMART" id="SM00454">
    <property type="entry name" value="SAM"/>
    <property type="match status" value="2"/>
</dbReference>
<dbReference type="SMART" id="SM00255">
    <property type="entry name" value="TIR"/>
    <property type="match status" value="1"/>
</dbReference>
<dbReference type="SUPFAM" id="SSF48371">
    <property type="entry name" value="ARM repeat"/>
    <property type="match status" value="1"/>
</dbReference>
<dbReference type="SUPFAM" id="SSF47769">
    <property type="entry name" value="SAM/Pointed domain"/>
    <property type="match status" value="2"/>
</dbReference>
<dbReference type="SUPFAM" id="SSF52200">
    <property type="entry name" value="Toll/Interleukin receptor TIR domain"/>
    <property type="match status" value="1"/>
</dbReference>
<dbReference type="PROSITE" id="PS50105">
    <property type="entry name" value="SAM_DOMAIN"/>
    <property type="match status" value="1"/>
</dbReference>
<dbReference type="PROSITE" id="PS50104">
    <property type="entry name" value="TIR"/>
    <property type="match status" value="1"/>
</dbReference>
<proteinExistence type="evidence at protein level"/>
<accession>Q86DA5</accession>
<accession>O17801</accession>
<accession>O17802</accession>
<accession>Q19373</accession>
<accession>Q7JMF4</accession>
<accession>Q7JMF5</accession>
<keyword id="KW-0002">3D-structure</keyword>
<keyword id="KW-0025">Alternative splicing</keyword>
<keyword id="KW-0963">Cytoplasm</keyword>
<keyword id="KW-0217">Developmental protein</keyword>
<keyword id="KW-0221">Differentiation</keyword>
<keyword id="KW-0378">Hydrolase</keyword>
<keyword id="KW-0391">Immunity</keyword>
<keyword id="KW-0399">Innate immunity</keyword>
<keyword id="KW-0520">NAD</keyword>
<keyword id="KW-0524">Neurogenesis</keyword>
<keyword id="KW-1185">Reference proteome</keyword>
<keyword id="KW-0677">Repeat</keyword>
<name>SARM1_CAEEL</name>
<sequence>MLPNRKPPRPSPSFQSLNNNNQRFPLRRSLKIAQAHSLPTVPSEDAKDDDLITPELSTDFDFREIQHRYLMALQNEQDGETTSTDDAFFELDDDDDLSSPSVPGSPVDPPSISVPLPPKSAPPCPTQPAPLTNGDLYPTILSNGTPIPNGRITPALSTVSVSLIHEARLQQSLSTPCNGSEEEMHNGQVRKESEYRRFKSEGSTAGASLPAAEKTHMDELSPVDQRSTSGTARFLIQQDSVVNPSTKMSNTEQVAMMHTLKTKLSKYQAMMDKAFEEIAKVEDANIIEGCTIVRKLMRKVWNTPKVSADLANALCDYLRDRDYFDKLIKMFISPNTAACDQVRMECGKVLEECTSSANLEYIVNKSYTKKIMIVAMKLNKTPDQQRLSLSLIGNLFKHSNAVSLSLIETDVIDHIILTFKRAPECPDILRHAALALANILLYTCFEGKKKIIQKKIPEWLFFLASQADDVTRYYACIAVCTIVSVKEFEPLVRKSDTMKLVEPFLQVHDPATFARDYHKYAQGNTKEWLERLLPMLQPSRRREARSVAAFHFTLEATIKKEQNKLDVFQEIGAIQALKEVASSPDEVAAKFASEALTVIGEEVPYKLAQQVPGWTCADVQYWVKKIGFEEYVEKFAKQMVDGDLLLQLTENDLKHDVGMISGLHRKRFLRELQTLKVAADYSSVDESNLDNFLMGLSPELSVYTYQMLTNGVNRSLLSSLTDEMMQNACGITNPIHRLKLTQAFETAKHPDDVEVAMLSKQIDVFISYRRSTGNQLASLIKVLLQLRGYRVFIDVDKLYAGKFDSSLLKNIQAAKHFILVLTPNSLDRLLNDDNCEDWVHKELKCAFEHQKNIIPIFDTAFEFPTKEDQIPNDIRMITKYNGVKWVHDYQDACMAKVVRFITGELNRTTPTTKEMPSISRKTTQQRWQTTNTVSRTGPSRSIGGPRMEPPTPTFTPTGSQERATSTRRKIQPSASTTSDRN</sequence>
<protein>
    <recommendedName>
        <fullName evidence="16">NAD(+) hydrolase tir-1</fullName>
        <shortName evidence="16">NADase tir-1</shortName>
        <ecNumber evidence="14">3.2.2.6</ecNumber>
    </recommendedName>
    <alternativeName>
        <fullName>Neuronal symmetry protein 2</fullName>
    </alternativeName>
    <alternativeName>
        <fullName>SARM1 homolog</fullName>
    </alternativeName>
    <alternativeName>
        <fullName evidence="15">Sterile alpha and TIR motif-containing protein tir-1</fullName>
    </alternativeName>
</protein>
<comment type="function">
    <text evidence="5 6 7 9 10 11 12 13 14">NAD(+) hydrolase, which plays a key role in non-apoptotic cell death by regulating NAD(+) metabolism (PubMed:27671644). In response to stress, homooligomerizes and catalyzes cleavage of NAD(+) into ADP-D-ribose (ADPR) and nicotinamide; NAD(+) cleavage promoting non-apoptotic neuronal cell death (PubMed:31439792). In males, involved in non-apoptotic death of the linker cell which guides gonad elongation during larval development (PubMed:22363008). Required for both innate immune response and specification of AWC(OFF) neuron (PubMed:15048112, PubMed:15123841, PubMed:15625192). During late embryogenesis, it acts downstream of CAMKII (unc-43) to regulate specification of asymmetric odorant receptors in AWC(OFF) neuron via the nsy-1/ASK1 pmk-1/p38 MAP kinase signaling cascade. Required to localize nsy-1 to postsynaptic regions of AWC neuron, suggesting that it may act by assembling a signaling complex that regulate odorant receptor expression (PubMed:15625192). Also plays a central role in resistance to infection to a broad range of bacterial and fungi pathogens, possibly by activating pmk-1, independently of the NF-kappa-B pathway. Required for expression of antimicrobial peptides nlp-29 and nlp-31 (PubMed:15048112, PubMed:15123841). Its role in immune response and neuron specification may be mediated by the same nsy-1/ASK1 pmk-1/p38 MAP kinase cascade signaling pathway (PubMed:15048112, PubMed:15123841, PubMed:15625192). Involved in the response to anoxic conditions probably by activating the p38 pathway composed of nsy-1/sek-1/pmk-1 (PubMed:21212236). Involved in regulation of the serotonergic response of ADF neurons to pathogenic food (PubMed:23505381). In addition, plays a role in the up-regulation of gcs-1 upon arsenite treatment, most likely through activation of pmk-1, to confer protection against toxicity induced by heavy metals (PubMed:25204677).</text>
</comment>
<comment type="function">
    <molecule>Isoform b</molecule>
    <text evidence="8">Regulates expression of antimicrobial peptide nlp-29 in response to fungal infection or physical injury.</text>
</comment>
<comment type="catalytic activity">
    <reaction evidence="14">
        <text>NAD(+) + H2O = ADP-D-ribose + nicotinamide + H(+)</text>
        <dbReference type="Rhea" id="RHEA:16301"/>
        <dbReference type="ChEBI" id="CHEBI:15377"/>
        <dbReference type="ChEBI" id="CHEBI:15378"/>
        <dbReference type="ChEBI" id="CHEBI:17154"/>
        <dbReference type="ChEBI" id="CHEBI:57540"/>
        <dbReference type="ChEBI" id="CHEBI:57967"/>
        <dbReference type="EC" id="3.2.2.6"/>
    </reaction>
    <physiologicalReaction direction="left-to-right" evidence="14">
        <dbReference type="Rhea" id="RHEA:16302"/>
    </physiologicalReaction>
</comment>
<comment type="subunit">
    <text evidence="5 7 13">Homodimer (PubMed:15048112, PubMed:27671644). Interacts with rab-1, pal-1 and unc-43 (PubMed:15048112, PubMed:15625192).</text>
</comment>
<comment type="interaction">
    <interactant intactId="EBI-319472">
        <id>Q86DA5</id>
    </interactant>
    <interactant intactId="EBI-319472">
        <id>Q86DA5</id>
        <label>tir-1</label>
    </interactant>
    <organismsDiffer>false</organismsDiffer>
    <experiments>3</experiments>
</comment>
<comment type="subcellular location">
    <subcellularLocation>
        <location evidence="7">Cytoplasm</location>
    </subcellularLocation>
</comment>
<comment type="alternative products">
    <event type="alternative splicing"/>
    <isoform>
        <id>Q86DA5-1</id>
        <name evidence="19">c</name>
        <sequence type="displayed"/>
    </isoform>
    <isoform>
        <id>Q86DA5-2</id>
        <name evidence="17">a</name>
        <sequence type="described" ref="VSP_060730 VSP_060731"/>
    </isoform>
    <isoform>
        <id>Q86DA5-3</id>
        <name evidence="18">b</name>
        <sequence type="described" ref="VSP_060732"/>
    </isoform>
    <isoform>
        <id>Q86DA5-4</id>
        <name evidence="20">d</name>
        <sequence type="described" ref="VSP_013613"/>
    </isoform>
    <isoform>
        <id>Q86DA5-5</id>
        <name evidence="21">e</name>
        <sequence type="described" ref="VSP_060733 VSP_060731"/>
    </isoform>
</comment>
<comment type="tissue specificity">
    <text evidence="5 7">Highly expressed in hypodermis. Localizes to postsynaptic regions of axons.</text>
</comment>
<comment type="domain">
    <text evidence="7">The SAM domains mediate the localization to postsynaptic regions of neurons.</text>
</comment>
<comment type="domain">
    <text evidence="1">The TIR domain mediates NAD(+) hydrolase (NADase) activity. Self-association of TIR domains is required for NADase activity.</text>
</comment>
<comment type="disruption phenotype">
    <text evidence="12">RNAi-mediated knockdown results in reduced survival and reduced pmk-1 phosphorylation in response to the heavy metal arsenite.</text>
</comment>
<comment type="similarity">
    <text evidence="16">Belongs to the SARM1 family.</text>
</comment>
<reference key="1">
    <citation type="journal article" date="1998" name="Science">
        <title>Genome sequence of the nematode C. elegans: a platform for investigating biology.</title>
        <authorList>
            <consortium name="The C. elegans sequencing consortium"/>
        </authorList>
    </citation>
    <scope>NUCLEOTIDE SEQUENCE [LARGE SCALE GENOMIC DNA]</scope>
    <source>
        <strain>Bristol N2</strain>
    </source>
</reference>
<reference key="2">
    <citation type="journal article" date="2004" name="Nat. Immunol.">
        <title>TLR-independent control of innate immunity in Caenorhabditis elegans by the TIR domain adaptor protein TIR-1, an ortholog of human SARM.</title>
        <authorList>
            <person name="Couillault C."/>
            <person name="Pujol N."/>
            <person name="Reboul J."/>
            <person name="Sabatier L."/>
            <person name="Guichou J.-F."/>
            <person name="Kohara Y."/>
            <person name="Ewbank J.J."/>
        </authorList>
    </citation>
    <scope>FUNCTION</scope>
    <scope>TISSUE SPECIFICITY</scope>
    <scope>HOMODIMERIZATION</scope>
    <scope>INTERACTION WITH RAB-1 AND PAL-1</scope>
</reference>
<reference key="3">
    <citation type="journal article" date="2004" name="Proc. Natl. Acad. Sci. U.S.A.">
        <title>Requirement for a conserved Toll/interleukin-1 resistance domain protein in the Caenorhabditis elegans immune response.</title>
        <authorList>
            <person name="Liberati N.T."/>
            <person name="Fitzgerald K.A."/>
            <person name="Kim D.H."/>
            <person name="Feinbaum R."/>
            <person name="Golenbock D.T."/>
            <person name="Ausubel F.M."/>
        </authorList>
    </citation>
    <scope>FUNCTION</scope>
</reference>
<reference key="4">
    <citation type="journal article" date="2005" name="Genes Dev.">
        <title>A Toll-interleukin 1 repeat protein at the synapse specifies asymmetric odorant receptor expression via ASK1 MAPKKK signaling.</title>
        <authorList>
            <person name="Chuang C.-F."/>
            <person name="Bargmann C.I."/>
        </authorList>
    </citation>
    <scope>FUNCTION</scope>
    <scope>SUBCELLULAR LOCATION</scope>
    <scope>TISSUE SPECIFICITY</scope>
    <scope>INTERACTION WITH UNC-43</scope>
</reference>
<reference key="5">
    <citation type="journal article" date="2007" name="Sci. STKE">
        <title>Studies of SARM1 uncover similarities between immune and neuronal responses to danger.</title>
        <authorList>
            <person name="Dalod M."/>
        </authorList>
    </citation>
    <scope>REVIEW</scope>
</reference>
<reference key="6">
    <citation type="journal article" date="2008" name="Curr. Biol.">
        <title>Distinct innate immune responses to infection and wounding in the C. elegans epidermis.</title>
        <authorList>
            <person name="Pujol N."/>
            <person name="Cypowyj S."/>
            <person name="Ziegler K."/>
            <person name="Millet A."/>
            <person name="Astrain A."/>
            <person name="Goncharov A."/>
            <person name="Jin Y."/>
            <person name="Chisholm A.D."/>
            <person name="Ewbank J.J."/>
        </authorList>
    </citation>
    <scope>FUNCTION</scope>
</reference>
<reference key="7">
    <citation type="journal article" date="2011" name="Genetics">
        <title>Regulation of anoxic death in Caenorhabditis elegans by mammalian apoptosis signal-regulating kinase (ASK) family proteins.</title>
        <authorList>
            <person name="Hayakawa T."/>
            <person name="Kato K."/>
            <person name="Hayakawa R."/>
            <person name="Hisamoto N."/>
            <person name="Matsumoto K."/>
            <person name="Takeda K."/>
            <person name="Ichijo H."/>
        </authorList>
    </citation>
    <scope>FUNCTION</scope>
</reference>
<reference key="8">
    <citation type="journal article" date="2012" name="Science">
        <title>Control of nonapoptotic developmental cell death in Caenorhabditis elegans by a polyglutamine-repeat protein.</title>
        <authorList>
            <person name="Blum E.S."/>
            <person name="Abraham M.C."/>
            <person name="Yoshimura S."/>
            <person name="Lu Y."/>
            <person name="Shaham S."/>
        </authorList>
    </citation>
    <scope>FUNCTION</scope>
</reference>
<reference key="9">
    <citation type="journal article" date="2013" name="PLoS Genet.">
        <title>RFX transcription factor DAF-19 regulates 5-HT and innate immune responses to pathogenic bacteria in Caenorhabditis elegans.</title>
        <authorList>
            <person name="Xie Y."/>
            <person name="Moussaif M."/>
            <person name="Choi S."/>
            <person name="Xu L."/>
            <person name="Sze J.Y."/>
        </authorList>
    </citation>
    <scope>FUNCTION</scope>
</reference>
<reference key="10">
    <citation type="journal article" date="2014" name="BMC Biol.">
        <title>Genome-wide screening identifies new genes required for stress-induced phase 2 detoxification gene expression in animals.</title>
        <authorList>
            <person name="Crook-McMahon H.M."/>
            <person name="Olahova M."/>
            <person name="Button E.L."/>
            <person name="Winter J.J."/>
            <person name="Veal E.A."/>
        </authorList>
    </citation>
    <scope>FUNCTION</scope>
    <scope>DISRUPTION PHENOTYPE</scope>
</reference>
<reference key="11">
    <citation type="journal article" date="2016" name="Proc. Natl. Acad. Sci. U.S.A.">
        <title>SARM1-specific motifs in the TIR domain enable NAD+ loss and regulate injury-induced SARM1 activation.</title>
        <authorList>
            <person name="Summers D.W."/>
            <person name="Gibson D.A."/>
            <person name="DiAntonio A."/>
            <person name="Milbrandt J."/>
        </authorList>
    </citation>
    <scope>FUNCTION</scope>
    <scope>SUBUNIT</scope>
</reference>
<reference key="12">
    <citation type="journal article" date="2019" name="Science">
        <title>NAD+ cleavage activity by animal and plant TIR domains in cell death pathways.</title>
        <authorList>
            <person name="Horsefield S."/>
            <person name="Burdett H."/>
            <person name="Zhang X."/>
            <person name="Manik M.K."/>
            <person name="Shi Y."/>
            <person name="Chen J."/>
            <person name="Qi T."/>
            <person name="Gilley J."/>
            <person name="Lai J.S."/>
            <person name="Rank M.X."/>
            <person name="Casey L.W."/>
            <person name="Gu W."/>
            <person name="Ericsson D.J."/>
            <person name="Foley G."/>
            <person name="Hughes R.O."/>
            <person name="Bosanac T."/>
            <person name="von Itzstein M."/>
            <person name="Rathjen J.P."/>
            <person name="Nanson J.D."/>
            <person name="Boden M."/>
            <person name="Dry I.B."/>
            <person name="Williams S.J."/>
            <person name="Staskawicz B.J."/>
            <person name="Coleman M.P."/>
            <person name="Ve T."/>
            <person name="Dodds P.N."/>
            <person name="Kobe B."/>
        </authorList>
    </citation>
    <scope>FUNCTION</scope>
    <scope>CATALYTIC ACTIVITY</scope>
</reference>
<gene>
    <name evidence="15 19" type="primary">tir-1</name>
    <name evidence="19" type="synonym">nsy-2</name>
    <name evidence="19" type="ORF">F13B10.1</name>
</gene>